<protein>
    <recommendedName>
        <fullName>Delta-aminolevulinic acid dehydratase</fullName>
        <shortName>ALAD</shortName>
        <shortName>ALADH</shortName>
        <ecNumber>4.2.1.24</ecNumber>
    </recommendedName>
    <alternativeName>
        <fullName>Porphobilinogen synthase</fullName>
    </alternativeName>
</protein>
<gene>
    <name type="primary">hemB</name>
    <name type="ordered locus">sll1994</name>
</gene>
<evidence type="ECO:0000250" key="1"/>
<evidence type="ECO:0000305" key="2"/>
<proteinExistence type="inferred from homology"/>
<comment type="function">
    <text evidence="1">Catalyzes an early step in the biosynthesis of tetrapyrroles. Binds two molecules of 5-aminolevulinate per subunit, each at a distinct site, and catalyzes their condensation to form porphobilinogen (By similarity).</text>
</comment>
<comment type="catalytic activity">
    <reaction>
        <text>2 5-aminolevulinate = porphobilinogen + 2 H2O + H(+)</text>
        <dbReference type="Rhea" id="RHEA:24064"/>
        <dbReference type="ChEBI" id="CHEBI:15377"/>
        <dbReference type="ChEBI" id="CHEBI:15378"/>
        <dbReference type="ChEBI" id="CHEBI:58126"/>
        <dbReference type="ChEBI" id="CHEBI:356416"/>
        <dbReference type="EC" id="4.2.1.24"/>
    </reaction>
</comment>
<comment type="cofactor">
    <cofactor evidence="1">
        <name>Zn(2+)</name>
        <dbReference type="ChEBI" id="CHEBI:29105"/>
    </cofactor>
    <text evidence="1">Binds 1 zinc ion per monomer.</text>
</comment>
<comment type="pathway">
    <text>Porphyrin-containing compound metabolism; protoporphyrin-IX biosynthesis; coproporphyrinogen-III from 5-aminolevulinate: step 1/4.</text>
</comment>
<comment type="subunit">
    <text evidence="1">Homooctamer.</text>
</comment>
<comment type="similarity">
    <text evidence="2">Belongs to the ALAD family.</text>
</comment>
<feature type="chain" id="PRO_0000140521" description="Delta-aminolevulinic acid dehydratase">
    <location>
        <begin position="1"/>
        <end position="327"/>
    </location>
</feature>
<feature type="active site" description="Schiff-base intermediate with substrate" evidence="1">
    <location>
        <position position="198"/>
    </location>
</feature>
<feature type="active site" description="Schiff-base intermediate with substrate" evidence="1">
    <location>
        <position position="251"/>
    </location>
</feature>
<feature type="binding site" evidence="1">
    <location>
        <position position="119"/>
    </location>
    <ligand>
        <name>Zn(2+)</name>
        <dbReference type="ChEBI" id="CHEBI:29105"/>
        <note>catalytic</note>
    </ligand>
</feature>
<feature type="binding site" evidence="1">
    <location>
        <position position="121"/>
    </location>
    <ligand>
        <name>Zn(2+)</name>
        <dbReference type="ChEBI" id="CHEBI:29105"/>
        <note>catalytic</note>
    </ligand>
</feature>
<feature type="binding site" evidence="1">
    <location>
        <position position="129"/>
    </location>
    <ligand>
        <name>Zn(2+)</name>
        <dbReference type="ChEBI" id="CHEBI:29105"/>
        <note>catalytic</note>
    </ligand>
</feature>
<feature type="binding site" evidence="1">
    <location>
        <position position="208"/>
    </location>
    <ligand>
        <name>5-aminolevulinate</name>
        <dbReference type="ChEBI" id="CHEBI:356416"/>
        <label>1</label>
    </ligand>
</feature>
<feature type="binding site" evidence="1">
    <location>
        <position position="220"/>
    </location>
    <ligand>
        <name>5-aminolevulinate</name>
        <dbReference type="ChEBI" id="CHEBI:356416"/>
        <label>1</label>
    </ligand>
</feature>
<feature type="binding site" evidence="1">
    <location>
        <position position="236"/>
    </location>
    <ligand>
        <name>Mg(2+)</name>
        <dbReference type="ChEBI" id="CHEBI:18420"/>
    </ligand>
</feature>
<feature type="binding site" evidence="1">
    <location>
        <position position="277"/>
    </location>
    <ligand>
        <name>5-aminolevulinate</name>
        <dbReference type="ChEBI" id="CHEBI:356416"/>
        <label>2</label>
    </ligand>
</feature>
<feature type="binding site" evidence="1">
    <location>
        <position position="316"/>
    </location>
    <ligand>
        <name>5-aminolevulinate</name>
        <dbReference type="ChEBI" id="CHEBI:356416"/>
        <label>2</label>
    </ligand>
</feature>
<keyword id="KW-0350">Heme biosynthesis</keyword>
<keyword id="KW-0456">Lyase</keyword>
<keyword id="KW-0460">Magnesium</keyword>
<keyword id="KW-0479">Metal-binding</keyword>
<keyword id="KW-0627">Porphyrin biosynthesis</keyword>
<keyword id="KW-1185">Reference proteome</keyword>
<keyword id="KW-0862">Zinc</keyword>
<accession>P77969</accession>
<organism>
    <name type="scientific">Synechocystis sp. (strain ATCC 27184 / PCC 6803 / Kazusa)</name>
    <dbReference type="NCBI Taxonomy" id="1111708"/>
    <lineage>
        <taxon>Bacteria</taxon>
        <taxon>Bacillati</taxon>
        <taxon>Cyanobacteriota</taxon>
        <taxon>Cyanophyceae</taxon>
        <taxon>Synechococcales</taxon>
        <taxon>Merismopediaceae</taxon>
        <taxon>Synechocystis</taxon>
    </lineage>
</organism>
<sequence>MFPTIRPRRLRQTDVLRRMVRENTLTVNDLIYPLFAVPGNAIAKEVVSMPGVYQLSVDKIVDEAKEVRDLGIPAIILFGIPEDKDTDATGAWHDCGIVQKATEAVKKAVPDLVVIVDTCLCEYTNHGHCGYLETGDLTGRVLNDPTLELLKKTAVSQANAGADVIAPSGMMDGFVQAIREALDDHDFQNIPILSYAAKYASAYYGPFRDAADSSPQFGDRRTYQMDPGNSREALKEVELDLLEGADMVMVKPALSYMDIIWRIKEMTNLPVAAYNVSGEYSMVKAAALNGWIDEQKVTLETLTSFKRAGADLILTYHAKDAARWLQD</sequence>
<dbReference type="EC" id="4.2.1.24"/>
<dbReference type="EMBL" id="BA000022">
    <property type="protein sequence ID" value="BAA18067.1"/>
    <property type="molecule type" value="Genomic_DNA"/>
</dbReference>
<dbReference type="PIR" id="S75506">
    <property type="entry name" value="S75506"/>
</dbReference>
<dbReference type="SMR" id="P77969"/>
<dbReference type="FunCoup" id="P77969">
    <property type="interactions" value="473"/>
</dbReference>
<dbReference type="IntAct" id="P77969">
    <property type="interactions" value="2"/>
</dbReference>
<dbReference type="STRING" id="1148.gene:10498938"/>
<dbReference type="PaxDb" id="1148-1653151"/>
<dbReference type="EnsemblBacteria" id="BAA18067">
    <property type="protein sequence ID" value="BAA18067"/>
    <property type="gene ID" value="BAA18067"/>
</dbReference>
<dbReference type="KEGG" id="syn:sll1994"/>
<dbReference type="eggNOG" id="COG0113">
    <property type="taxonomic scope" value="Bacteria"/>
</dbReference>
<dbReference type="InParanoid" id="P77969"/>
<dbReference type="PhylomeDB" id="P77969"/>
<dbReference type="UniPathway" id="UPA00251">
    <property type="reaction ID" value="UER00318"/>
</dbReference>
<dbReference type="Proteomes" id="UP000001425">
    <property type="component" value="Chromosome"/>
</dbReference>
<dbReference type="GO" id="GO:0005829">
    <property type="term" value="C:cytosol"/>
    <property type="evidence" value="ECO:0000318"/>
    <property type="project" value="GO_Central"/>
</dbReference>
<dbReference type="GO" id="GO:0004655">
    <property type="term" value="F:porphobilinogen synthase activity"/>
    <property type="evidence" value="ECO:0000318"/>
    <property type="project" value="GO_Central"/>
</dbReference>
<dbReference type="GO" id="GO:0008270">
    <property type="term" value="F:zinc ion binding"/>
    <property type="evidence" value="ECO:0000318"/>
    <property type="project" value="GO_Central"/>
</dbReference>
<dbReference type="GO" id="GO:0006783">
    <property type="term" value="P:heme biosynthetic process"/>
    <property type="evidence" value="ECO:0000318"/>
    <property type="project" value="GO_Central"/>
</dbReference>
<dbReference type="GO" id="GO:0006782">
    <property type="term" value="P:protoporphyrinogen IX biosynthetic process"/>
    <property type="evidence" value="ECO:0007669"/>
    <property type="project" value="UniProtKB-UniPathway"/>
</dbReference>
<dbReference type="CDD" id="cd00384">
    <property type="entry name" value="ALAD_PBGS"/>
    <property type="match status" value="1"/>
</dbReference>
<dbReference type="FunFam" id="3.20.20.70:FF:000019">
    <property type="entry name" value="Delta-aminolevulinic acid dehydratase"/>
    <property type="match status" value="1"/>
</dbReference>
<dbReference type="Gene3D" id="3.20.20.70">
    <property type="entry name" value="Aldolase class I"/>
    <property type="match status" value="1"/>
</dbReference>
<dbReference type="InterPro" id="IPR001731">
    <property type="entry name" value="ALAD"/>
</dbReference>
<dbReference type="InterPro" id="IPR030656">
    <property type="entry name" value="ALAD_AS"/>
</dbReference>
<dbReference type="InterPro" id="IPR013785">
    <property type="entry name" value="Aldolase_TIM"/>
</dbReference>
<dbReference type="NCBIfam" id="NF006762">
    <property type="entry name" value="PRK09283.1"/>
    <property type="match status" value="1"/>
</dbReference>
<dbReference type="PANTHER" id="PTHR11458">
    <property type="entry name" value="DELTA-AMINOLEVULINIC ACID DEHYDRATASE"/>
    <property type="match status" value="1"/>
</dbReference>
<dbReference type="PANTHER" id="PTHR11458:SF0">
    <property type="entry name" value="DELTA-AMINOLEVULINIC ACID DEHYDRATASE"/>
    <property type="match status" value="1"/>
</dbReference>
<dbReference type="Pfam" id="PF00490">
    <property type="entry name" value="ALAD"/>
    <property type="match status" value="1"/>
</dbReference>
<dbReference type="PIRSF" id="PIRSF001415">
    <property type="entry name" value="Porphbilin_synth"/>
    <property type="match status" value="1"/>
</dbReference>
<dbReference type="PRINTS" id="PR00144">
    <property type="entry name" value="DALDHYDRTASE"/>
</dbReference>
<dbReference type="SMART" id="SM01004">
    <property type="entry name" value="ALAD"/>
    <property type="match status" value="1"/>
</dbReference>
<dbReference type="SUPFAM" id="SSF51569">
    <property type="entry name" value="Aldolase"/>
    <property type="match status" value="1"/>
</dbReference>
<dbReference type="PROSITE" id="PS00169">
    <property type="entry name" value="D_ALA_DEHYDRATASE"/>
    <property type="match status" value="1"/>
</dbReference>
<name>HEM2_SYNY3</name>
<reference key="1">
    <citation type="journal article" date="1996" name="DNA Res.">
        <title>Sequence analysis of the genome of the unicellular cyanobacterium Synechocystis sp. strain PCC6803. II. Sequence determination of the entire genome and assignment of potential protein-coding regions.</title>
        <authorList>
            <person name="Kaneko T."/>
            <person name="Sato S."/>
            <person name="Kotani H."/>
            <person name="Tanaka A."/>
            <person name="Asamizu E."/>
            <person name="Nakamura Y."/>
            <person name="Miyajima N."/>
            <person name="Hirosawa M."/>
            <person name="Sugiura M."/>
            <person name="Sasamoto S."/>
            <person name="Kimura T."/>
            <person name="Hosouchi T."/>
            <person name="Matsuno A."/>
            <person name="Muraki A."/>
            <person name="Nakazaki N."/>
            <person name="Naruo K."/>
            <person name="Okumura S."/>
            <person name="Shimpo S."/>
            <person name="Takeuchi C."/>
            <person name="Wada T."/>
            <person name="Watanabe A."/>
            <person name="Yamada M."/>
            <person name="Yasuda M."/>
            <person name="Tabata S."/>
        </authorList>
    </citation>
    <scope>NUCLEOTIDE SEQUENCE [LARGE SCALE GENOMIC DNA]</scope>
    <source>
        <strain>ATCC 27184 / PCC 6803 / Kazusa</strain>
    </source>
</reference>